<dbReference type="EC" id="5.4.2.10" evidence="1"/>
<dbReference type="EMBL" id="AP009178">
    <property type="protein sequence ID" value="BAF69223.1"/>
    <property type="molecule type" value="Genomic_DNA"/>
</dbReference>
<dbReference type="RefSeq" id="WP_011979649.1">
    <property type="nucleotide sequence ID" value="NC_009662.1"/>
</dbReference>
<dbReference type="SMR" id="A6Q164"/>
<dbReference type="FunCoup" id="A6Q164">
    <property type="interactions" value="371"/>
</dbReference>
<dbReference type="STRING" id="387092.NIS_0106"/>
<dbReference type="KEGG" id="nis:NIS_0106"/>
<dbReference type="eggNOG" id="COG1109">
    <property type="taxonomic scope" value="Bacteria"/>
</dbReference>
<dbReference type="HOGENOM" id="CLU_016950_7_0_7"/>
<dbReference type="InParanoid" id="A6Q164"/>
<dbReference type="OrthoDB" id="9806956at2"/>
<dbReference type="Proteomes" id="UP000001118">
    <property type="component" value="Chromosome"/>
</dbReference>
<dbReference type="GO" id="GO:0005829">
    <property type="term" value="C:cytosol"/>
    <property type="evidence" value="ECO:0007669"/>
    <property type="project" value="TreeGrafter"/>
</dbReference>
<dbReference type="GO" id="GO:0000287">
    <property type="term" value="F:magnesium ion binding"/>
    <property type="evidence" value="ECO:0007669"/>
    <property type="project" value="UniProtKB-UniRule"/>
</dbReference>
<dbReference type="GO" id="GO:0008966">
    <property type="term" value="F:phosphoglucosamine mutase activity"/>
    <property type="evidence" value="ECO:0007669"/>
    <property type="project" value="UniProtKB-UniRule"/>
</dbReference>
<dbReference type="GO" id="GO:0004615">
    <property type="term" value="F:phosphomannomutase activity"/>
    <property type="evidence" value="ECO:0007669"/>
    <property type="project" value="TreeGrafter"/>
</dbReference>
<dbReference type="GO" id="GO:0005975">
    <property type="term" value="P:carbohydrate metabolic process"/>
    <property type="evidence" value="ECO:0007669"/>
    <property type="project" value="InterPro"/>
</dbReference>
<dbReference type="GO" id="GO:0009252">
    <property type="term" value="P:peptidoglycan biosynthetic process"/>
    <property type="evidence" value="ECO:0007669"/>
    <property type="project" value="TreeGrafter"/>
</dbReference>
<dbReference type="GO" id="GO:0006048">
    <property type="term" value="P:UDP-N-acetylglucosamine biosynthetic process"/>
    <property type="evidence" value="ECO:0007669"/>
    <property type="project" value="TreeGrafter"/>
</dbReference>
<dbReference type="CDD" id="cd05802">
    <property type="entry name" value="GlmM"/>
    <property type="match status" value="1"/>
</dbReference>
<dbReference type="FunFam" id="3.40.120.10:FF:000001">
    <property type="entry name" value="Phosphoglucosamine mutase"/>
    <property type="match status" value="1"/>
</dbReference>
<dbReference type="FunFam" id="3.40.120.10:FF:000003">
    <property type="entry name" value="Phosphoglucosamine mutase"/>
    <property type="match status" value="1"/>
</dbReference>
<dbReference type="Gene3D" id="3.40.120.10">
    <property type="entry name" value="Alpha-D-Glucose-1,6-Bisphosphate, subunit A, domain 3"/>
    <property type="match status" value="3"/>
</dbReference>
<dbReference type="Gene3D" id="3.30.310.50">
    <property type="entry name" value="Alpha-D-phosphohexomutase, C-terminal domain"/>
    <property type="match status" value="1"/>
</dbReference>
<dbReference type="HAMAP" id="MF_01554_B">
    <property type="entry name" value="GlmM_B"/>
    <property type="match status" value="1"/>
</dbReference>
<dbReference type="InterPro" id="IPR005844">
    <property type="entry name" value="A-D-PHexomutase_a/b/a-I"/>
</dbReference>
<dbReference type="InterPro" id="IPR016055">
    <property type="entry name" value="A-D-PHexomutase_a/b/a-I/II/III"/>
</dbReference>
<dbReference type="InterPro" id="IPR005845">
    <property type="entry name" value="A-D-PHexomutase_a/b/a-II"/>
</dbReference>
<dbReference type="InterPro" id="IPR005846">
    <property type="entry name" value="A-D-PHexomutase_a/b/a-III"/>
</dbReference>
<dbReference type="InterPro" id="IPR005843">
    <property type="entry name" value="A-D-PHexomutase_C"/>
</dbReference>
<dbReference type="InterPro" id="IPR036900">
    <property type="entry name" value="A-D-PHexomutase_C_sf"/>
</dbReference>
<dbReference type="InterPro" id="IPR016066">
    <property type="entry name" value="A-D-PHexomutase_CS"/>
</dbReference>
<dbReference type="InterPro" id="IPR005841">
    <property type="entry name" value="Alpha-D-phosphohexomutase_SF"/>
</dbReference>
<dbReference type="InterPro" id="IPR006352">
    <property type="entry name" value="GlmM_bact"/>
</dbReference>
<dbReference type="InterPro" id="IPR050060">
    <property type="entry name" value="Phosphoglucosamine_mutase"/>
</dbReference>
<dbReference type="NCBIfam" id="TIGR01455">
    <property type="entry name" value="glmM"/>
    <property type="match status" value="1"/>
</dbReference>
<dbReference type="NCBIfam" id="NF008139">
    <property type="entry name" value="PRK10887.1"/>
    <property type="match status" value="1"/>
</dbReference>
<dbReference type="PANTHER" id="PTHR42946:SF1">
    <property type="entry name" value="PHOSPHOGLUCOMUTASE (ALPHA-D-GLUCOSE-1,6-BISPHOSPHATE-DEPENDENT)"/>
    <property type="match status" value="1"/>
</dbReference>
<dbReference type="PANTHER" id="PTHR42946">
    <property type="entry name" value="PHOSPHOHEXOSE MUTASE"/>
    <property type="match status" value="1"/>
</dbReference>
<dbReference type="Pfam" id="PF02878">
    <property type="entry name" value="PGM_PMM_I"/>
    <property type="match status" value="1"/>
</dbReference>
<dbReference type="Pfam" id="PF02879">
    <property type="entry name" value="PGM_PMM_II"/>
    <property type="match status" value="1"/>
</dbReference>
<dbReference type="Pfam" id="PF02880">
    <property type="entry name" value="PGM_PMM_III"/>
    <property type="match status" value="1"/>
</dbReference>
<dbReference type="Pfam" id="PF00408">
    <property type="entry name" value="PGM_PMM_IV"/>
    <property type="match status" value="1"/>
</dbReference>
<dbReference type="PRINTS" id="PR00509">
    <property type="entry name" value="PGMPMM"/>
</dbReference>
<dbReference type="SUPFAM" id="SSF55957">
    <property type="entry name" value="Phosphoglucomutase, C-terminal domain"/>
    <property type="match status" value="1"/>
</dbReference>
<dbReference type="SUPFAM" id="SSF53738">
    <property type="entry name" value="Phosphoglucomutase, first 3 domains"/>
    <property type="match status" value="3"/>
</dbReference>
<dbReference type="PROSITE" id="PS00710">
    <property type="entry name" value="PGM_PMM"/>
    <property type="match status" value="1"/>
</dbReference>
<sequence>MELFGTDGVRGKAGKLLSAQLSMRLAMAAGIYFRKNSRTNKIVVGKDTRRSGYMIENALVSGLTAVGYNVIQVGPMPTPAIAFLTEDLRCDAGIMISASHNPYYDNGIKFFNHQGDKLQPEDEKAIEAIFFDEQTIEENQKTDQDIGSSKRIDDVIGRYIVHLKNSFPKDLTLNGLRVVIDTANGAAYKVAPTVFSELGAEVFVINDEPNGFNINEKCGAMYPGELAKKVREYRADIGFALDGDADRLVVVDEKGKIVPGDLVIGALATYLKQEGMLQADAIVATVMSNKALEDYLATLGIELVRSNVGDKYVLDEMKKRGINFGGESSGHIIFGDYSKTGDGIVTALQITAYMLRSQKGASEILYPFSLYPSKMENVTVKEKKPLETIEEFPELQKRIEKSGIRSLIRYSGTENKLRILLEGKDQKKLEKLMEELIQFFKERLS</sequence>
<organism>
    <name type="scientific">Nitratiruptor sp. (strain SB155-2)</name>
    <dbReference type="NCBI Taxonomy" id="387092"/>
    <lineage>
        <taxon>Bacteria</taxon>
        <taxon>Pseudomonadati</taxon>
        <taxon>Campylobacterota</taxon>
        <taxon>Epsilonproteobacteria</taxon>
        <taxon>Nautiliales</taxon>
        <taxon>Nitratiruptoraceae</taxon>
        <taxon>Nitratiruptor</taxon>
    </lineage>
</organism>
<protein>
    <recommendedName>
        <fullName evidence="1">Phosphoglucosamine mutase</fullName>
        <ecNumber evidence="1">5.4.2.10</ecNumber>
    </recommendedName>
</protein>
<keyword id="KW-0413">Isomerase</keyword>
<keyword id="KW-0460">Magnesium</keyword>
<keyword id="KW-0479">Metal-binding</keyword>
<keyword id="KW-0597">Phosphoprotein</keyword>
<keyword id="KW-1185">Reference proteome</keyword>
<accession>A6Q164</accession>
<gene>
    <name evidence="1" type="primary">glmM</name>
    <name type="ordered locus">NIS_0106</name>
</gene>
<name>GLMM_NITSB</name>
<feature type="chain" id="PRO_0000305657" description="Phosphoglucosamine mutase">
    <location>
        <begin position="1"/>
        <end position="445"/>
    </location>
</feature>
<feature type="active site" description="Phosphoserine intermediate" evidence="1">
    <location>
        <position position="99"/>
    </location>
</feature>
<feature type="binding site" description="via phosphate group" evidence="1">
    <location>
        <position position="99"/>
    </location>
    <ligand>
        <name>Mg(2+)</name>
        <dbReference type="ChEBI" id="CHEBI:18420"/>
    </ligand>
</feature>
<feature type="binding site" evidence="1">
    <location>
        <position position="242"/>
    </location>
    <ligand>
        <name>Mg(2+)</name>
        <dbReference type="ChEBI" id="CHEBI:18420"/>
    </ligand>
</feature>
<feature type="binding site" evidence="1">
    <location>
        <position position="244"/>
    </location>
    <ligand>
        <name>Mg(2+)</name>
        <dbReference type="ChEBI" id="CHEBI:18420"/>
    </ligand>
</feature>
<feature type="binding site" evidence="1">
    <location>
        <position position="246"/>
    </location>
    <ligand>
        <name>Mg(2+)</name>
        <dbReference type="ChEBI" id="CHEBI:18420"/>
    </ligand>
</feature>
<feature type="modified residue" description="Phosphoserine" evidence="1">
    <location>
        <position position="99"/>
    </location>
</feature>
<proteinExistence type="inferred from homology"/>
<evidence type="ECO:0000255" key="1">
    <source>
        <dbReference type="HAMAP-Rule" id="MF_01554"/>
    </source>
</evidence>
<comment type="function">
    <text evidence="1">Catalyzes the conversion of glucosamine-6-phosphate to glucosamine-1-phosphate.</text>
</comment>
<comment type="catalytic activity">
    <reaction evidence="1">
        <text>alpha-D-glucosamine 1-phosphate = D-glucosamine 6-phosphate</text>
        <dbReference type="Rhea" id="RHEA:23424"/>
        <dbReference type="ChEBI" id="CHEBI:58516"/>
        <dbReference type="ChEBI" id="CHEBI:58725"/>
        <dbReference type="EC" id="5.4.2.10"/>
    </reaction>
</comment>
<comment type="cofactor">
    <cofactor evidence="1">
        <name>Mg(2+)</name>
        <dbReference type="ChEBI" id="CHEBI:18420"/>
    </cofactor>
    <text evidence="1">Binds 1 Mg(2+) ion per subunit.</text>
</comment>
<comment type="PTM">
    <text evidence="1">Activated by phosphorylation.</text>
</comment>
<comment type="similarity">
    <text evidence="1">Belongs to the phosphohexose mutase family.</text>
</comment>
<reference key="1">
    <citation type="journal article" date="2007" name="Proc. Natl. Acad. Sci. U.S.A.">
        <title>Deep-sea vent epsilon-proteobacterial genomes provide insights into emergence of pathogens.</title>
        <authorList>
            <person name="Nakagawa S."/>
            <person name="Takaki Y."/>
            <person name="Shimamura S."/>
            <person name="Reysenbach A.-L."/>
            <person name="Takai K."/>
            <person name="Horikoshi K."/>
        </authorList>
    </citation>
    <scope>NUCLEOTIDE SEQUENCE [LARGE SCALE GENOMIC DNA]</scope>
    <source>
        <strain>SB155-2</strain>
    </source>
</reference>